<proteinExistence type="inferred from homology"/>
<dbReference type="EC" id="2.7.6.5"/>
<dbReference type="EMBL" id="BA000033">
    <property type="protein sequence ID" value="BAB95449.1"/>
    <property type="status" value="ALT_INIT"/>
    <property type="molecule type" value="Genomic_DNA"/>
</dbReference>
<dbReference type="SMR" id="P0A0E9"/>
<dbReference type="KEGG" id="sam:MW1584"/>
<dbReference type="HOGENOM" id="CLU_012300_3_0_9"/>
<dbReference type="UniPathway" id="UPA00908">
    <property type="reaction ID" value="UER00884"/>
</dbReference>
<dbReference type="GO" id="GO:0005886">
    <property type="term" value="C:plasma membrane"/>
    <property type="evidence" value="ECO:0007669"/>
    <property type="project" value="TreeGrafter"/>
</dbReference>
<dbReference type="GO" id="GO:0005524">
    <property type="term" value="F:ATP binding"/>
    <property type="evidence" value="ECO:0007669"/>
    <property type="project" value="UniProtKB-KW"/>
</dbReference>
<dbReference type="GO" id="GO:0005525">
    <property type="term" value="F:GTP binding"/>
    <property type="evidence" value="ECO:0007669"/>
    <property type="project" value="UniProtKB-KW"/>
</dbReference>
<dbReference type="GO" id="GO:0008728">
    <property type="term" value="F:GTP diphosphokinase activity"/>
    <property type="evidence" value="ECO:0007669"/>
    <property type="project" value="UniProtKB-EC"/>
</dbReference>
<dbReference type="GO" id="GO:0016301">
    <property type="term" value="F:kinase activity"/>
    <property type="evidence" value="ECO:0007669"/>
    <property type="project" value="UniProtKB-KW"/>
</dbReference>
<dbReference type="GO" id="GO:0015970">
    <property type="term" value="P:guanosine tetraphosphate biosynthetic process"/>
    <property type="evidence" value="ECO:0007669"/>
    <property type="project" value="UniProtKB-UniPathway"/>
</dbReference>
<dbReference type="CDD" id="cd04876">
    <property type="entry name" value="ACT_RelA-SpoT"/>
    <property type="match status" value="1"/>
</dbReference>
<dbReference type="CDD" id="cd00077">
    <property type="entry name" value="HDc"/>
    <property type="match status" value="1"/>
</dbReference>
<dbReference type="CDD" id="cd05399">
    <property type="entry name" value="NT_Rel-Spo_like"/>
    <property type="match status" value="1"/>
</dbReference>
<dbReference type="CDD" id="cd01668">
    <property type="entry name" value="TGS_RSH"/>
    <property type="match status" value="1"/>
</dbReference>
<dbReference type="FunFam" id="3.10.20.30:FF:000002">
    <property type="entry name" value="GTP pyrophosphokinase (RelA/SpoT)"/>
    <property type="match status" value="1"/>
</dbReference>
<dbReference type="FunFam" id="1.10.3210.10:FF:000001">
    <property type="entry name" value="GTP pyrophosphokinase RelA"/>
    <property type="match status" value="1"/>
</dbReference>
<dbReference type="FunFam" id="3.30.460.10:FF:000001">
    <property type="entry name" value="GTP pyrophosphokinase RelA"/>
    <property type="match status" value="1"/>
</dbReference>
<dbReference type="Gene3D" id="3.10.20.30">
    <property type="match status" value="1"/>
</dbReference>
<dbReference type="Gene3D" id="3.30.70.260">
    <property type="match status" value="1"/>
</dbReference>
<dbReference type="Gene3D" id="3.30.460.10">
    <property type="entry name" value="Beta Polymerase, domain 2"/>
    <property type="match status" value="1"/>
</dbReference>
<dbReference type="Gene3D" id="1.10.3210.10">
    <property type="entry name" value="Hypothetical protein af1432"/>
    <property type="match status" value="1"/>
</dbReference>
<dbReference type="InterPro" id="IPR045865">
    <property type="entry name" value="ACT-like_dom_sf"/>
</dbReference>
<dbReference type="InterPro" id="IPR002912">
    <property type="entry name" value="ACT_dom"/>
</dbReference>
<dbReference type="InterPro" id="IPR012675">
    <property type="entry name" value="Beta-grasp_dom_sf"/>
</dbReference>
<dbReference type="InterPro" id="IPR003607">
    <property type="entry name" value="HD/PDEase_dom"/>
</dbReference>
<dbReference type="InterPro" id="IPR006674">
    <property type="entry name" value="HD_domain"/>
</dbReference>
<dbReference type="InterPro" id="IPR043519">
    <property type="entry name" value="NT_sf"/>
</dbReference>
<dbReference type="InterPro" id="IPR004811">
    <property type="entry name" value="RelA/Spo_fam"/>
</dbReference>
<dbReference type="InterPro" id="IPR045600">
    <property type="entry name" value="RelA/SpoT_AH_RIS"/>
</dbReference>
<dbReference type="InterPro" id="IPR007685">
    <property type="entry name" value="RelA_SpoT"/>
</dbReference>
<dbReference type="InterPro" id="IPR004095">
    <property type="entry name" value="TGS"/>
</dbReference>
<dbReference type="InterPro" id="IPR012676">
    <property type="entry name" value="TGS-like"/>
</dbReference>
<dbReference type="InterPro" id="IPR033655">
    <property type="entry name" value="TGS_RelA/SpoT"/>
</dbReference>
<dbReference type="NCBIfam" id="TIGR00691">
    <property type="entry name" value="spoT_relA"/>
    <property type="match status" value="1"/>
</dbReference>
<dbReference type="PANTHER" id="PTHR21262:SF31">
    <property type="entry name" value="GTP PYROPHOSPHOKINASE"/>
    <property type="match status" value="1"/>
</dbReference>
<dbReference type="PANTHER" id="PTHR21262">
    <property type="entry name" value="GUANOSINE-3',5'-BIS DIPHOSPHATE 3'-PYROPHOSPHOHYDROLASE"/>
    <property type="match status" value="1"/>
</dbReference>
<dbReference type="Pfam" id="PF13291">
    <property type="entry name" value="ACT_4"/>
    <property type="match status" value="1"/>
</dbReference>
<dbReference type="Pfam" id="PF13328">
    <property type="entry name" value="HD_4"/>
    <property type="match status" value="1"/>
</dbReference>
<dbReference type="Pfam" id="PF19296">
    <property type="entry name" value="RelA_AH_RIS"/>
    <property type="match status" value="1"/>
</dbReference>
<dbReference type="Pfam" id="PF04607">
    <property type="entry name" value="RelA_SpoT"/>
    <property type="match status" value="1"/>
</dbReference>
<dbReference type="Pfam" id="PF02824">
    <property type="entry name" value="TGS"/>
    <property type="match status" value="1"/>
</dbReference>
<dbReference type="SMART" id="SM00471">
    <property type="entry name" value="HDc"/>
    <property type="match status" value="1"/>
</dbReference>
<dbReference type="SMART" id="SM00954">
    <property type="entry name" value="RelA_SpoT"/>
    <property type="match status" value="1"/>
</dbReference>
<dbReference type="SUPFAM" id="SSF55021">
    <property type="entry name" value="ACT-like"/>
    <property type="match status" value="1"/>
</dbReference>
<dbReference type="SUPFAM" id="SSF109604">
    <property type="entry name" value="HD-domain/PDEase-like"/>
    <property type="match status" value="1"/>
</dbReference>
<dbReference type="SUPFAM" id="SSF81301">
    <property type="entry name" value="Nucleotidyltransferase"/>
    <property type="match status" value="1"/>
</dbReference>
<dbReference type="SUPFAM" id="SSF81271">
    <property type="entry name" value="TGS-like"/>
    <property type="match status" value="1"/>
</dbReference>
<dbReference type="PROSITE" id="PS51671">
    <property type="entry name" value="ACT"/>
    <property type="match status" value="1"/>
</dbReference>
<dbReference type="PROSITE" id="PS51831">
    <property type="entry name" value="HD"/>
    <property type="match status" value="1"/>
</dbReference>
<dbReference type="PROSITE" id="PS51880">
    <property type="entry name" value="TGS"/>
    <property type="match status" value="1"/>
</dbReference>
<organism>
    <name type="scientific">Staphylococcus aureus (strain MW2)</name>
    <dbReference type="NCBI Taxonomy" id="196620"/>
    <lineage>
        <taxon>Bacteria</taxon>
        <taxon>Bacillati</taxon>
        <taxon>Bacillota</taxon>
        <taxon>Bacilli</taxon>
        <taxon>Bacillales</taxon>
        <taxon>Staphylococcaceae</taxon>
        <taxon>Staphylococcus</taxon>
    </lineage>
</organism>
<name>RELA_STAAW</name>
<gene>
    <name type="primary">relA</name>
    <name type="ordered locus">MW1584</name>
</gene>
<protein>
    <recommendedName>
        <fullName>GTP pyrophosphokinase</fullName>
        <ecNumber>2.7.6.5</ecNumber>
    </recommendedName>
    <alternativeName>
        <fullName>(p)ppGpp synthase</fullName>
    </alternativeName>
    <alternativeName>
        <fullName>ATP:GTP 3'-pyrophosphotransferase</fullName>
    </alternativeName>
    <alternativeName>
        <fullName>ppGpp synthase I</fullName>
    </alternativeName>
</protein>
<comment type="function">
    <text evidence="1">In eubacteria ppGpp (guanosine 3'-diphosphate 5'-diphosphate) is a mediator of the stringent response that coordinates a variety of cellular activities in response to changes in nutritional abundance. This enzyme catalyzes the formation of pppGpp which is then hydrolyzed to form ppGpp (By similarity).</text>
</comment>
<comment type="catalytic activity">
    <reaction>
        <text>GTP + ATP = guanosine 3'-diphosphate 5'-triphosphate + AMP</text>
        <dbReference type="Rhea" id="RHEA:22088"/>
        <dbReference type="ChEBI" id="CHEBI:30616"/>
        <dbReference type="ChEBI" id="CHEBI:37565"/>
        <dbReference type="ChEBI" id="CHEBI:142410"/>
        <dbReference type="ChEBI" id="CHEBI:456215"/>
        <dbReference type="EC" id="2.7.6.5"/>
    </reaction>
</comment>
<comment type="pathway">
    <text>Purine metabolism; ppGpp biosynthesis; ppGpp from GTP: step 1/2.</text>
</comment>
<comment type="similarity">
    <text evidence="5">Belongs to the RelA/SpoT family.</text>
</comment>
<comment type="sequence caution" evidence="5">
    <conflict type="erroneous initiation">
        <sequence resource="EMBL-CDS" id="BAB95449"/>
    </conflict>
</comment>
<feature type="chain" id="PRO_0000166560" description="GTP pyrophosphokinase">
    <location>
        <begin position="1"/>
        <end position="736"/>
    </location>
</feature>
<feature type="domain" description="HD" evidence="3">
    <location>
        <begin position="57"/>
        <end position="156"/>
    </location>
</feature>
<feature type="domain" description="TGS" evidence="4">
    <location>
        <begin position="400"/>
        <end position="461"/>
    </location>
</feature>
<feature type="domain" description="ACT" evidence="2">
    <location>
        <begin position="662"/>
        <end position="736"/>
    </location>
</feature>
<sequence length="736" mass="84537">MNGVYHIMNNEYPYSADEVLHKAKSYLSADEYEYVLKSYHIAYEAHKGQFRKNGLPYIMHPIQVAGILTEMRLDGPTIVAGFLHDVIEDTPYTFEDVKEMFNEEVARIVDGVTKLKKVKYRSKEEQQAENHRKLFIAIAKDVRVILVKLADRLHNMRTLKAMPREKQIRISRETLEIYAPLAHRLGINTIKWELEDTALRYIDNVQYFRIVNLMKKKRSEREAYIETAIDRIRTEMDRMNIEGDINGRPKHIYSIYRKMMKQKKQFDQIFDLLAIRVIVNSINDCYAILGLVHTLWKPMPGRFKDYIAMPKQNLYQSLHTTVVGPNGDPLEIQIRTFDMHEIAEHGVAAHWAYKEGKKVSEKDQTYQNKLNWLKELAEADHTSSDAQEFMETLKYDLQSDKVYAFTPASDVIELPYGAVPIDFAYAIHSEVGNKMIGAKVNGKIVPIDYILQTGDIVEIRTSKHSYGPSRDWLKIVKSSSAKGKIKSFFKKQDRSSNIEKGRMMVEVEIKEQGFRVEDILTEKNIQVVNEKYNFANEDDLFAAVGFGGVTSLQIVNKLTERQRILDKQRALNEAQEVTKSLPIKDNIITDSGVYVEGLENVLIKLSKCCNPIPGDDIVGYITKGHGIKVHRTDCPNIKNETERLINVEWVKSKDATQKYQVDLEVTAYDRNGLLNEVLQAVSSTAGNLIKVSGRSDIDKNAIINISVMVKNVNDVYRVVEKIKQLGDVYTVTRVWN</sequence>
<accession>P0A0E9</accession>
<accession>O32419</accession>
<evidence type="ECO:0000250" key="1"/>
<evidence type="ECO:0000255" key="2">
    <source>
        <dbReference type="PROSITE-ProRule" id="PRU01007"/>
    </source>
</evidence>
<evidence type="ECO:0000255" key="3">
    <source>
        <dbReference type="PROSITE-ProRule" id="PRU01175"/>
    </source>
</evidence>
<evidence type="ECO:0000255" key="4">
    <source>
        <dbReference type="PROSITE-ProRule" id="PRU01228"/>
    </source>
</evidence>
<evidence type="ECO:0000305" key="5"/>
<reference key="1">
    <citation type="journal article" date="2002" name="Lancet">
        <title>Genome and virulence determinants of high virulence community-acquired MRSA.</title>
        <authorList>
            <person name="Baba T."/>
            <person name="Takeuchi F."/>
            <person name="Kuroda M."/>
            <person name="Yuzawa H."/>
            <person name="Aoki K."/>
            <person name="Oguchi A."/>
            <person name="Nagai Y."/>
            <person name="Iwama N."/>
            <person name="Asano K."/>
            <person name="Naimi T."/>
            <person name="Kuroda H."/>
            <person name="Cui L."/>
            <person name="Yamamoto K."/>
            <person name="Hiramatsu K."/>
        </authorList>
    </citation>
    <scope>NUCLEOTIDE SEQUENCE [LARGE SCALE GENOMIC DNA]</scope>
    <source>
        <strain>MW2</strain>
    </source>
</reference>
<keyword id="KW-0067">ATP-binding</keyword>
<keyword id="KW-0342">GTP-binding</keyword>
<keyword id="KW-0418">Kinase</keyword>
<keyword id="KW-0547">Nucleotide-binding</keyword>
<keyword id="KW-0808">Transferase</keyword>